<comment type="function">
    <text evidence="4 5">Receptor-like cytoplasmic kinase involved in the transduction of signal between the host cell surface chitin receptor complex CERK1-LYK5 and the intracellular MAPKKK5-dependent mitogen-activated protein kinase (MAPK) cascade that leads to chitin-induced immunity (PubMed:24750441, PubMed:27679653). Phosphorylates and activates MAPKKK5 when phosphorylated by CERK1 after elicitation by chitin (PubMed:27679653).</text>
</comment>
<comment type="catalytic activity">
    <reaction evidence="5">
        <text>L-seryl-[protein] + ATP = O-phospho-L-seryl-[protein] + ADP + H(+)</text>
        <dbReference type="Rhea" id="RHEA:17989"/>
        <dbReference type="Rhea" id="RHEA-COMP:9863"/>
        <dbReference type="Rhea" id="RHEA-COMP:11604"/>
        <dbReference type="ChEBI" id="CHEBI:15378"/>
        <dbReference type="ChEBI" id="CHEBI:29999"/>
        <dbReference type="ChEBI" id="CHEBI:30616"/>
        <dbReference type="ChEBI" id="CHEBI:83421"/>
        <dbReference type="ChEBI" id="CHEBI:456216"/>
        <dbReference type="EC" id="2.7.11.1"/>
    </reaction>
</comment>
<comment type="catalytic activity">
    <reaction evidence="5">
        <text>L-threonyl-[protein] + ATP = O-phospho-L-threonyl-[protein] + ADP + H(+)</text>
        <dbReference type="Rhea" id="RHEA:46608"/>
        <dbReference type="Rhea" id="RHEA-COMP:11060"/>
        <dbReference type="Rhea" id="RHEA-COMP:11605"/>
        <dbReference type="ChEBI" id="CHEBI:15378"/>
        <dbReference type="ChEBI" id="CHEBI:30013"/>
        <dbReference type="ChEBI" id="CHEBI:30616"/>
        <dbReference type="ChEBI" id="CHEBI:61977"/>
        <dbReference type="ChEBI" id="CHEBI:456216"/>
        <dbReference type="EC" id="2.7.11.1"/>
    </reaction>
</comment>
<comment type="subunit">
    <text evidence="4 5">Interacts with CERK1 (preferentially unphosphorylated) at the plasma membrane (PubMed:24750441, PubMed:27679653). Binds to MAPKKK5 at the plasma membrane; disassociation is induced by chitin perception by the CERK1 complex. Also associates with MAPKKK3 (PubMed:27679653).</text>
</comment>
<comment type="subcellular location">
    <subcellularLocation>
        <location evidence="4 5">Cell membrane</location>
        <topology evidence="4">Lipid-anchor</topology>
    </subcellularLocation>
</comment>
<comment type="induction">
    <text evidence="5">Levels are regulated in a proteasome-dependent manner (at proteome level).</text>
</comment>
<comment type="PTM">
    <text evidence="4 5">Phosphorylated by CERK1 upon elicitation by chitin.</text>
</comment>
<comment type="PTM">
    <text evidence="1">Palmitoylation at Cys-4 and Cys-7 are required for plasma membrane location.</text>
</comment>
<comment type="disruption phenotype">
    <text evidence="4">Impaired chitin-induced defense responses such as MAPK activation (e.g. MPK3/6) and callose deposition leading to reduced disease resistance against fungal (e.g. A.brassicicola) and bacterial (e.g. P.syringae pv. tomato DC3000 hrcC) infections.</text>
</comment>
<comment type="similarity">
    <text evidence="2">Belongs to the protein kinase superfamily. Ser/Thr protein kinase family.</text>
</comment>
<comment type="sequence caution" evidence="8">
    <conflict type="erroneous termination">
        <sequence resource="EMBL-CDS" id="ABK28701"/>
    </conflict>
    <text>Extended C-terminus.</text>
</comment>
<evidence type="ECO:0000250" key="1">
    <source>
        <dbReference type="UniProtKB" id="Q9FE20"/>
    </source>
</evidence>
<evidence type="ECO:0000255" key="2">
    <source>
        <dbReference type="PROSITE-ProRule" id="PRU00159"/>
    </source>
</evidence>
<evidence type="ECO:0000256" key="3">
    <source>
        <dbReference type="SAM" id="MobiDB-lite"/>
    </source>
</evidence>
<evidence type="ECO:0000269" key="4">
    <source>
    </source>
</evidence>
<evidence type="ECO:0000269" key="5">
    <source>
    </source>
</evidence>
<evidence type="ECO:0000303" key="6">
    <source>
    </source>
</evidence>
<evidence type="ECO:0000303" key="7">
    <source>
    </source>
</evidence>
<evidence type="ECO:0000305" key="8"/>
<evidence type="ECO:0000305" key="9">
    <source>
    </source>
</evidence>
<evidence type="ECO:0000312" key="10">
    <source>
        <dbReference type="Araport" id="AT5G18610"/>
    </source>
</evidence>
<evidence type="ECO:0000312" key="11">
    <source>
        <dbReference type="EMBL" id="AC069328"/>
    </source>
</evidence>
<evidence type="ECO:0007744" key="12">
    <source>
    </source>
</evidence>
<evidence type="ECO:0007744" key="13">
    <source>
    </source>
</evidence>
<evidence type="ECO:0007744" key="14">
    <source>
    </source>
</evidence>
<feature type="chain" id="PRO_0000438618" description="Serine/threonine-protein kinase PBL27">
    <location>
        <begin position="1"/>
        <end position="513"/>
    </location>
</feature>
<feature type="domain" description="Protein kinase" evidence="2">
    <location>
        <begin position="83"/>
        <end position="360"/>
    </location>
</feature>
<feature type="region of interest" description="Disordered" evidence="3">
    <location>
        <begin position="1"/>
        <end position="61"/>
    </location>
</feature>
<feature type="region of interest" description="Disordered" evidence="3">
    <location>
        <begin position="365"/>
        <end position="513"/>
    </location>
</feature>
<feature type="compositionally biased region" description="Basic and acidic residues" evidence="3">
    <location>
        <begin position="15"/>
        <end position="27"/>
    </location>
</feature>
<feature type="compositionally biased region" description="Basic and acidic residues" evidence="3">
    <location>
        <begin position="38"/>
        <end position="57"/>
    </location>
</feature>
<feature type="compositionally biased region" description="Polar residues" evidence="3">
    <location>
        <begin position="365"/>
        <end position="378"/>
    </location>
</feature>
<feature type="compositionally biased region" description="Basic and acidic residues" evidence="3">
    <location>
        <begin position="417"/>
        <end position="428"/>
    </location>
</feature>
<feature type="compositionally biased region" description="Gly residues" evidence="3">
    <location>
        <begin position="434"/>
        <end position="446"/>
    </location>
</feature>
<feature type="compositionally biased region" description="Polar residues" evidence="3">
    <location>
        <begin position="456"/>
        <end position="473"/>
    </location>
</feature>
<feature type="compositionally biased region" description="Basic and acidic residues" evidence="3">
    <location>
        <begin position="475"/>
        <end position="486"/>
    </location>
</feature>
<feature type="compositionally biased region" description="Polar residues" evidence="3">
    <location>
        <begin position="504"/>
        <end position="513"/>
    </location>
</feature>
<feature type="active site" description="Proton acceptor" evidence="2">
    <location>
        <position position="210"/>
    </location>
</feature>
<feature type="binding site" evidence="2">
    <location>
        <begin position="89"/>
        <end position="97"/>
    </location>
    <ligand>
        <name>ATP</name>
        <dbReference type="ChEBI" id="CHEBI:30616"/>
    </ligand>
</feature>
<feature type="binding site" evidence="2">
    <location>
        <position position="112"/>
    </location>
    <ligand>
        <name>ATP</name>
        <dbReference type="ChEBI" id="CHEBI:30616"/>
    </ligand>
</feature>
<feature type="modified residue" description="Phosphoserine; by CERK1" evidence="9">
    <location>
        <position position="244"/>
    </location>
</feature>
<feature type="modified residue" description="Phosphothreonine; by CERK1" evidence="9">
    <location>
        <position position="245"/>
    </location>
</feature>
<feature type="modified residue" description="Phosphothreonine; by CERK1" evidence="9">
    <location>
        <position position="250"/>
    </location>
</feature>
<feature type="modified residue" description="Phosphoserine" evidence="14">
    <location>
        <position position="392"/>
    </location>
</feature>
<feature type="modified residue" description="Phosphoserine" evidence="12 13">
    <location>
        <position position="401"/>
    </location>
</feature>
<feature type="lipid moiety-binding region" description="S-palmitoyl cysteine" evidence="1">
    <location>
        <position position="4"/>
    </location>
</feature>
<feature type="lipid moiety-binding region" description="S-palmitoyl cysteine" evidence="1">
    <location>
        <position position="7"/>
    </location>
</feature>
<feature type="mutagenesis site" description="No autophosphorylation activity. Directly phosphorylated by CERK1 in vitro. Impaired CERK1-mediated phosphorylation; when associated with A-244; A-245 and A-250." evidence="4 5">
    <original>K</original>
    <variation>E</variation>
    <location>
        <position position="112"/>
    </location>
</feature>
<feature type="mutagenesis site" description="Impaired CERK1-mediated phosphorylation; when associated with E-112; A-245 and A-250." evidence="5">
    <original>S</original>
    <variation>A</variation>
    <location>
        <position position="244"/>
    </location>
</feature>
<feature type="mutagenesis site" description="Impaired CERK1-mediated phosphorylation; when associated with E-112; A-244 and A-250." evidence="5">
    <original>T</original>
    <variation>A</variation>
    <location>
        <position position="245"/>
    </location>
</feature>
<feature type="mutagenesis site" description="Impaired CERK1-mediated phosphorylation; when associated with E-112; A-244 and A-245." evidence="5">
    <original>T</original>
    <variation>A</variation>
    <location>
        <position position="250"/>
    </location>
</feature>
<organism>
    <name type="scientific">Arabidopsis thaliana</name>
    <name type="common">Mouse-ear cress</name>
    <dbReference type="NCBI Taxonomy" id="3702"/>
    <lineage>
        <taxon>Eukaryota</taxon>
        <taxon>Viridiplantae</taxon>
        <taxon>Streptophyta</taxon>
        <taxon>Embryophyta</taxon>
        <taxon>Tracheophyta</taxon>
        <taxon>Spermatophyta</taxon>
        <taxon>Magnoliopsida</taxon>
        <taxon>eudicotyledons</taxon>
        <taxon>Gunneridae</taxon>
        <taxon>Pentapetalae</taxon>
        <taxon>rosids</taxon>
        <taxon>malvids</taxon>
        <taxon>Brassicales</taxon>
        <taxon>Brassicaceae</taxon>
        <taxon>Camelineae</taxon>
        <taxon>Arabidopsis</taxon>
    </lineage>
</organism>
<name>PBL27_ARATH</name>
<reference key="1">
    <citation type="journal article" date="2000" name="Nature">
        <title>Sequence and analysis of chromosome 5 of the plant Arabidopsis thaliana.</title>
        <authorList>
            <person name="Tabata S."/>
            <person name="Kaneko T."/>
            <person name="Nakamura Y."/>
            <person name="Kotani H."/>
            <person name="Kato T."/>
            <person name="Asamizu E."/>
            <person name="Miyajima N."/>
            <person name="Sasamoto S."/>
            <person name="Kimura T."/>
            <person name="Hosouchi T."/>
            <person name="Kawashima K."/>
            <person name="Kohara M."/>
            <person name="Matsumoto M."/>
            <person name="Matsuno A."/>
            <person name="Muraki A."/>
            <person name="Nakayama S."/>
            <person name="Nakazaki N."/>
            <person name="Naruo K."/>
            <person name="Okumura S."/>
            <person name="Shinpo S."/>
            <person name="Takeuchi C."/>
            <person name="Wada T."/>
            <person name="Watanabe A."/>
            <person name="Yamada M."/>
            <person name="Yasuda M."/>
            <person name="Sato S."/>
            <person name="de la Bastide M."/>
            <person name="Huang E."/>
            <person name="Spiegel L."/>
            <person name="Gnoj L."/>
            <person name="O'Shaughnessy A."/>
            <person name="Preston R."/>
            <person name="Habermann K."/>
            <person name="Murray J."/>
            <person name="Johnson D."/>
            <person name="Rohlfing T."/>
            <person name="Nelson J."/>
            <person name="Stoneking T."/>
            <person name="Pepin K."/>
            <person name="Spieth J."/>
            <person name="Sekhon M."/>
            <person name="Armstrong J."/>
            <person name="Becker M."/>
            <person name="Belter E."/>
            <person name="Cordum H."/>
            <person name="Cordes M."/>
            <person name="Courtney L."/>
            <person name="Courtney W."/>
            <person name="Dante M."/>
            <person name="Du H."/>
            <person name="Edwards J."/>
            <person name="Fryman J."/>
            <person name="Haakensen B."/>
            <person name="Lamar E."/>
            <person name="Latreille P."/>
            <person name="Leonard S."/>
            <person name="Meyer R."/>
            <person name="Mulvaney E."/>
            <person name="Ozersky P."/>
            <person name="Riley A."/>
            <person name="Strowmatt C."/>
            <person name="Wagner-McPherson C."/>
            <person name="Wollam A."/>
            <person name="Yoakum M."/>
            <person name="Bell M."/>
            <person name="Dedhia N."/>
            <person name="Parnell L."/>
            <person name="Shah R."/>
            <person name="Rodriguez M."/>
            <person name="Hoon See L."/>
            <person name="Vil D."/>
            <person name="Baker J."/>
            <person name="Kirchoff K."/>
            <person name="Toth K."/>
            <person name="King L."/>
            <person name="Bahret A."/>
            <person name="Miller B."/>
            <person name="Marra M.A."/>
            <person name="Martienssen R."/>
            <person name="McCombie W.R."/>
            <person name="Wilson R.K."/>
            <person name="Murphy G."/>
            <person name="Bancroft I."/>
            <person name="Volckaert G."/>
            <person name="Wambutt R."/>
            <person name="Duesterhoeft A."/>
            <person name="Stiekema W."/>
            <person name="Pohl T."/>
            <person name="Entian K.-D."/>
            <person name="Terryn N."/>
            <person name="Hartley N."/>
            <person name="Bent E."/>
            <person name="Johnson S."/>
            <person name="Langham S.-A."/>
            <person name="McCullagh B."/>
            <person name="Robben J."/>
            <person name="Grymonprez B."/>
            <person name="Zimmermann W."/>
            <person name="Ramsperger U."/>
            <person name="Wedler H."/>
            <person name="Balke K."/>
            <person name="Wedler E."/>
            <person name="Peters S."/>
            <person name="van Staveren M."/>
            <person name="Dirkse W."/>
            <person name="Mooijman P."/>
            <person name="Klein Lankhorst R."/>
            <person name="Weitzenegger T."/>
            <person name="Bothe G."/>
            <person name="Rose M."/>
            <person name="Hauf J."/>
            <person name="Berneiser S."/>
            <person name="Hempel S."/>
            <person name="Feldpausch M."/>
            <person name="Lamberth S."/>
            <person name="Villarroel R."/>
            <person name="Gielen J."/>
            <person name="Ardiles W."/>
            <person name="Bents O."/>
            <person name="Lemcke K."/>
            <person name="Kolesov G."/>
            <person name="Mayer K.F.X."/>
            <person name="Rudd S."/>
            <person name="Schoof H."/>
            <person name="Schueller C."/>
            <person name="Zaccaria P."/>
            <person name="Mewes H.-W."/>
            <person name="Bevan M."/>
            <person name="Fransz P.F."/>
        </authorList>
    </citation>
    <scope>NUCLEOTIDE SEQUENCE [LARGE SCALE GENOMIC DNA]</scope>
    <source>
        <strain>cv. Columbia</strain>
    </source>
</reference>
<reference key="2">
    <citation type="journal article" date="2017" name="Plant J.">
        <title>Araport11: a complete reannotation of the Arabidopsis thaliana reference genome.</title>
        <authorList>
            <person name="Cheng C.Y."/>
            <person name="Krishnakumar V."/>
            <person name="Chan A.P."/>
            <person name="Thibaud-Nissen F."/>
            <person name="Schobel S."/>
            <person name="Town C.D."/>
        </authorList>
    </citation>
    <scope>GENOME REANNOTATION</scope>
    <source>
        <strain>cv. Columbia</strain>
    </source>
</reference>
<reference key="3">
    <citation type="journal article" date="2006" name="Plant Biotechnol. J.">
        <title>Simultaneous high-throughput recombinational cloning of open reading frames in closed and open configurations.</title>
        <authorList>
            <person name="Underwood B.A."/>
            <person name="Vanderhaeghen R."/>
            <person name="Whitford R."/>
            <person name="Town C.D."/>
            <person name="Hilson P."/>
        </authorList>
    </citation>
    <scope>NUCLEOTIDE SEQUENCE [LARGE SCALE MRNA]</scope>
    <source>
        <strain>cv. Columbia</strain>
    </source>
</reference>
<reference key="4">
    <citation type="journal article" date="2003" name="Mol. Cell. Proteomics">
        <title>Large-scale analysis of in vivo phosphorylated membrane proteins by immobilized metal ion affinity chromatography and mass spectrometry.</title>
        <authorList>
            <person name="Nuehse T.S."/>
            <person name="Stensballe A."/>
            <person name="Jensen O.N."/>
            <person name="Peck S.C."/>
        </authorList>
    </citation>
    <scope>PHOSPHORYLATION [LARGE SCALE ANALYSIS] AT SER-401</scope>
    <scope>IDENTIFICATION BY MASS SPECTROMETRY [LARGE SCALE ANALYSIS]</scope>
    <source>
        <strain>cv. La-0</strain>
    </source>
</reference>
<reference key="5">
    <citation type="journal article" date="2004" name="Plant Cell">
        <title>Phosphoproteomics of the Arabidopsis plasma membrane and a new phosphorylation site database.</title>
        <authorList>
            <person name="Nuehse T.S."/>
            <person name="Stensballe A."/>
            <person name="Jensen O.N."/>
            <person name="Peck S.C."/>
        </authorList>
    </citation>
    <scope>PHOSPHORYLATION [LARGE SCALE ANALYSIS] AT SER-401</scope>
    <scope>IDENTIFICATION BY MASS SPECTROMETRY [LARGE SCALE ANALYSIS]</scope>
</reference>
<reference key="6">
    <citation type="journal article" date="2009" name="J. Proteomics">
        <title>Phosphoproteomic analysis of nuclei-enriched fractions from Arabidopsis thaliana.</title>
        <authorList>
            <person name="Jones A.M.E."/>
            <person name="MacLean D."/>
            <person name="Studholme D.J."/>
            <person name="Serna-Sanz A."/>
            <person name="Andreasson E."/>
            <person name="Rathjen J.P."/>
            <person name="Peck S.C."/>
        </authorList>
    </citation>
    <scope>PHOSPHORYLATION [LARGE SCALE ANALYSIS] AT SER-392</scope>
    <scope>IDENTIFICATION BY MASS SPECTROMETRY [LARGE SCALE ANALYSIS]</scope>
    <source>
        <strain>cv. Columbia</strain>
    </source>
</reference>
<reference key="7">
    <citation type="journal article" date="2010" name="Cell Host Microbe">
        <title>Receptor-like cytoplasmic kinases integrate signaling from multiple plant immune receptors and are targeted by a Pseudomonas syringae effector.</title>
        <authorList>
            <person name="Zhang J."/>
            <person name="Li W."/>
            <person name="Xiang T."/>
            <person name="Liu Z."/>
            <person name="Laluk K."/>
            <person name="Ding X."/>
            <person name="Zou Y."/>
            <person name="Gao M."/>
            <person name="Zhang X."/>
            <person name="Chen S."/>
            <person name="Mengiste T."/>
            <person name="Zhang Y."/>
            <person name="Zhou J.M."/>
        </authorList>
    </citation>
    <scope>GENE FAMILY</scope>
    <scope>NOMENCLATURE</scope>
</reference>
<reference key="8">
    <citation type="journal article" date="2014" name="Plant J.">
        <title>Selective regulation of the chitin-induced defense response by the Arabidopsis receptor-like cytoplasmic kinase PBL27.</title>
        <authorList>
            <person name="Shinya T."/>
            <person name="Yamaguchi K."/>
            <person name="Desaki Y."/>
            <person name="Yamada K."/>
            <person name="Narisawa T."/>
            <person name="Kobayashi Y."/>
            <person name="Maeda K."/>
            <person name="Suzuki M."/>
            <person name="Tanimoto T."/>
            <person name="Takeda J."/>
            <person name="Nakashima M."/>
            <person name="Funama R."/>
            <person name="Narusaka M."/>
            <person name="Narusaka Y."/>
            <person name="Kaku H."/>
            <person name="Kawasaki T."/>
            <person name="Shibuya N."/>
        </authorList>
    </citation>
    <scope>FUNCTION</scope>
    <scope>DISRUPTION PHENOTYPE</scope>
    <scope>MUTAGENESIS OF LYS-112</scope>
    <scope>PHOSPHORYLATION BY CERK1</scope>
    <scope>INTERACTION WITH CERK1</scope>
    <scope>SUBCELLULAR LOCATION</scope>
    <source>
        <strain>cv. Columbia</strain>
    </source>
</reference>
<reference key="9">
    <citation type="journal article" date="2016" name="EMBO J.">
        <title>The Arabidopsis CERK1-associated kinase PBL27 connects chitin perception to MAPK activation.</title>
        <authorList>
            <person name="Yamada K."/>
            <person name="Yamaguchi K."/>
            <person name="Shirakawa T."/>
            <person name="Nakagami H."/>
            <person name="Mine A."/>
            <person name="Ishikawa K."/>
            <person name="Fujiwara M."/>
            <person name="Narusaka M."/>
            <person name="Narusaka Y."/>
            <person name="Ichimura K."/>
            <person name="Kobayashi Y."/>
            <person name="Matsui H."/>
            <person name="Nomura Y."/>
            <person name="Nomoto M."/>
            <person name="Tada Y."/>
            <person name="Fukao Y."/>
            <person name="Fukamizo T."/>
            <person name="Tsuda K."/>
            <person name="Shirasu K."/>
            <person name="Shibuya N."/>
            <person name="Kawasaki T."/>
        </authorList>
    </citation>
    <scope>FUNCTION</scope>
    <scope>MUTAGENESIS OF LYS-112; SER-244; THR-245 AND THR-250</scope>
    <scope>INTERACTION WITH CERK1; MAPKKK3 AND MAPKKK5</scope>
    <scope>SUBCELLULAR LOCATION</scope>
    <scope>PHOSPHORYLATION AT SER-244; THR-245 AND THR-250 BY CERK1</scope>
    <scope>INDUCTION</scope>
    <source>
        <strain>cv. Columbia</strain>
    </source>
</reference>
<accession>Q1PDV6</accession>
<accession>A0MFG6</accession>
<proteinExistence type="evidence at protein level"/>
<sequence length="513" mass="55931">MSGCLPCFGSSAKDAASKDSVKKELSAKDGSVTQSHHISLDKSKSRRGPEQKKELTAPKEGPTAHIAAQTFTFRELAAATKNFRPECLLGEGGFGRVYKGRLETTGQIVAVKQLDRNGLQGNREFLVEVLMLSLLHHPNLVNLIGYCADGDQRLLVYEYMPLGSLEDHLHDLPPDKEPLDWSTRMTIAAGAAKGLEYLHDKANPPVIYRDLKSSNILLGDGYHPKLSDFGLAKLGPVGDKTHVSTRVMGTYGYCAPEYAMTGQLTLKSDVYSFGVVFLELITGRKAIDNARAPGEHNLVAWARPLFKDRRKFPKMADPSLQGRYPMRGLYQALAVAAMCLQEQAATRPLIGDVVTALTYLASQTFDPNAPSGQNSRSGSGPPFIRTRDDRRSLGDGSSLDSPAETRSRLGSPATHKNSPDYRRRDMVREVNAGSEGGSETGGGSGRKWGLSDLEGQESQRGSPASVGRSSRGTPRNRDLDRERAVAEAKVWGENWRERKRATNGPGSFDSTND</sequence>
<protein>
    <recommendedName>
        <fullName evidence="6">Serine/threonine-protein kinase PBL27</fullName>
        <ecNumber evidence="5">2.7.11.1</ecNumber>
    </recommendedName>
    <alternativeName>
        <fullName evidence="6">PBS1-like protein 27</fullName>
    </alternativeName>
    <alternativeName>
        <fullName evidence="7">Receptor-like cytoplasmic kinase PBL27</fullName>
    </alternativeName>
</protein>
<keyword id="KW-0067">ATP-binding</keyword>
<keyword id="KW-1003">Cell membrane</keyword>
<keyword id="KW-0418">Kinase</keyword>
<keyword id="KW-0449">Lipoprotein</keyword>
<keyword id="KW-0472">Membrane</keyword>
<keyword id="KW-0547">Nucleotide-binding</keyword>
<keyword id="KW-0564">Palmitate</keyword>
<keyword id="KW-0597">Phosphoprotein</keyword>
<keyword id="KW-0611">Plant defense</keyword>
<keyword id="KW-1185">Reference proteome</keyword>
<keyword id="KW-0723">Serine/threonine-protein kinase</keyword>
<keyword id="KW-0808">Transferase</keyword>
<dbReference type="EC" id="2.7.11.1" evidence="5"/>
<dbReference type="EMBL" id="AC051627">
    <property type="status" value="NOT_ANNOTATED_CDS"/>
    <property type="molecule type" value="Genomic_DNA"/>
</dbReference>
<dbReference type="EMBL" id="AC069328">
    <property type="status" value="NOT_ANNOTATED_CDS"/>
    <property type="molecule type" value="Genomic_DNA"/>
</dbReference>
<dbReference type="EMBL" id="CP002688">
    <property type="protein sequence ID" value="AED92585.1"/>
    <property type="molecule type" value="Genomic_DNA"/>
</dbReference>
<dbReference type="EMBL" id="CP002688">
    <property type="protein sequence ID" value="AED92586.1"/>
    <property type="molecule type" value="Genomic_DNA"/>
</dbReference>
<dbReference type="EMBL" id="CP002688">
    <property type="protein sequence ID" value="ANM70412.1"/>
    <property type="molecule type" value="Genomic_DNA"/>
</dbReference>
<dbReference type="EMBL" id="DQ446962">
    <property type="protein sequence ID" value="ABE66165.1"/>
    <property type="molecule type" value="mRNA"/>
</dbReference>
<dbReference type="EMBL" id="DQ653292">
    <property type="protein sequence ID" value="ABK28701.1"/>
    <property type="status" value="ALT_SEQ"/>
    <property type="molecule type" value="mRNA"/>
</dbReference>
<dbReference type="RefSeq" id="NP_001190331.1">
    <property type="nucleotide sequence ID" value="NM_001203402.1"/>
</dbReference>
<dbReference type="RefSeq" id="NP_001318594.1">
    <property type="nucleotide sequence ID" value="NM_001343556.1"/>
</dbReference>
<dbReference type="RefSeq" id="NP_197362.1">
    <property type="nucleotide sequence ID" value="NM_121866.2"/>
</dbReference>
<dbReference type="SMR" id="Q1PDV6"/>
<dbReference type="FunCoup" id="Q1PDV6">
    <property type="interactions" value="1701"/>
</dbReference>
<dbReference type="STRING" id="3702.Q1PDV6"/>
<dbReference type="iPTMnet" id="Q1PDV6"/>
<dbReference type="SwissPalm" id="Q1PDV6"/>
<dbReference type="PaxDb" id="3702-AT5G18610.2"/>
<dbReference type="ProteomicsDB" id="236841"/>
<dbReference type="EnsemblPlants" id="AT5G18610.1">
    <property type="protein sequence ID" value="AT5G18610.1"/>
    <property type="gene ID" value="AT5G18610"/>
</dbReference>
<dbReference type="EnsemblPlants" id="AT5G18610.2">
    <property type="protein sequence ID" value="AT5G18610.2"/>
    <property type="gene ID" value="AT5G18610"/>
</dbReference>
<dbReference type="EnsemblPlants" id="AT5G18610.3">
    <property type="protein sequence ID" value="AT5G18610.3"/>
    <property type="gene ID" value="AT5G18610"/>
</dbReference>
<dbReference type="GeneID" id="831979"/>
<dbReference type="Gramene" id="AT5G18610.1">
    <property type="protein sequence ID" value="AT5G18610.1"/>
    <property type="gene ID" value="AT5G18610"/>
</dbReference>
<dbReference type="Gramene" id="AT5G18610.2">
    <property type="protein sequence ID" value="AT5G18610.2"/>
    <property type="gene ID" value="AT5G18610"/>
</dbReference>
<dbReference type="Gramene" id="AT5G18610.3">
    <property type="protein sequence ID" value="AT5G18610.3"/>
    <property type="gene ID" value="AT5G18610"/>
</dbReference>
<dbReference type="KEGG" id="ath:AT5G18610"/>
<dbReference type="Araport" id="AT5G18610"/>
<dbReference type="TAIR" id="AT5G18610">
    <property type="gene designation" value="PBL27"/>
</dbReference>
<dbReference type="eggNOG" id="KOG1187">
    <property type="taxonomic scope" value="Eukaryota"/>
</dbReference>
<dbReference type="HOGENOM" id="CLU_000288_21_0_1"/>
<dbReference type="InParanoid" id="Q1PDV6"/>
<dbReference type="OMA" id="IDNTRGP"/>
<dbReference type="PhylomeDB" id="Q1PDV6"/>
<dbReference type="PRO" id="PR:Q1PDV6"/>
<dbReference type="Proteomes" id="UP000006548">
    <property type="component" value="Chromosome 5"/>
</dbReference>
<dbReference type="ExpressionAtlas" id="Q1PDV6">
    <property type="expression patterns" value="baseline and differential"/>
</dbReference>
<dbReference type="GO" id="GO:0005886">
    <property type="term" value="C:plasma membrane"/>
    <property type="evidence" value="ECO:0000314"/>
    <property type="project" value="UniProtKB"/>
</dbReference>
<dbReference type="GO" id="GO:0005524">
    <property type="term" value="F:ATP binding"/>
    <property type="evidence" value="ECO:0007669"/>
    <property type="project" value="UniProtKB-KW"/>
</dbReference>
<dbReference type="GO" id="GO:0004672">
    <property type="term" value="F:protein kinase activity"/>
    <property type="evidence" value="ECO:0000314"/>
    <property type="project" value="GO_Central"/>
</dbReference>
<dbReference type="GO" id="GO:0106310">
    <property type="term" value="F:protein serine kinase activity"/>
    <property type="evidence" value="ECO:0007669"/>
    <property type="project" value="RHEA"/>
</dbReference>
<dbReference type="GO" id="GO:0004674">
    <property type="term" value="F:protein serine/threonine kinase activity"/>
    <property type="evidence" value="ECO:0007669"/>
    <property type="project" value="UniProtKB-KW"/>
</dbReference>
<dbReference type="GO" id="GO:0071323">
    <property type="term" value="P:cellular response to chitin"/>
    <property type="evidence" value="ECO:0000315"/>
    <property type="project" value="UniProtKB"/>
</dbReference>
<dbReference type="GO" id="GO:0050832">
    <property type="term" value="P:defense response to fungus"/>
    <property type="evidence" value="ECO:0000314"/>
    <property type="project" value="GO_Central"/>
</dbReference>
<dbReference type="GO" id="GO:0045087">
    <property type="term" value="P:innate immune response"/>
    <property type="evidence" value="ECO:0000315"/>
    <property type="project" value="TAIR"/>
</dbReference>
<dbReference type="GO" id="GO:1900426">
    <property type="term" value="P:positive regulation of defense response to bacterium"/>
    <property type="evidence" value="ECO:0000315"/>
    <property type="project" value="UniProtKB"/>
</dbReference>
<dbReference type="GO" id="GO:0043410">
    <property type="term" value="P:positive regulation of MAPK cascade"/>
    <property type="evidence" value="ECO:0000315"/>
    <property type="project" value="GO_Central"/>
</dbReference>
<dbReference type="GO" id="GO:1900150">
    <property type="term" value="P:regulation of defense response to fungus"/>
    <property type="evidence" value="ECO:0000315"/>
    <property type="project" value="UniProtKB"/>
</dbReference>
<dbReference type="GO" id="GO:0045088">
    <property type="term" value="P:regulation of innate immune response"/>
    <property type="evidence" value="ECO:0000315"/>
    <property type="project" value="UniProtKB"/>
</dbReference>
<dbReference type="CDD" id="cd14066">
    <property type="entry name" value="STKc_IRAK"/>
    <property type="match status" value="1"/>
</dbReference>
<dbReference type="FunFam" id="1.10.510.10:FF:000032">
    <property type="entry name" value="Serine/threonine-protein kinase PBS1"/>
    <property type="match status" value="1"/>
</dbReference>
<dbReference type="FunFam" id="3.30.200.20:FF:000248">
    <property type="entry name" value="Serine/threonine-protein kinase PBS1"/>
    <property type="match status" value="1"/>
</dbReference>
<dbReference type="Gene3D" id="3.30.200.20">
    <property type="entry name" value="Phosphorylase Kinase, domain 1"/>
    <property type="match status" value="1"/>
</dbReference>
<dbReference type="Gene3D" id="1.10.510.10">
    <property type="entry name" value="Transferase(Phosphotransferase) domain 1"/>
    <property type="match status" value="1"/>
</dbReference>
<dbReference type="InterPro" id="IPR011009">
    <property type="entry name" value="Kinase-like_dom_sf"/>
</dbReference>
<dbReference type="InterPro" id="IPR000719">
    <property type="entry name" value="Prot_kinase_dom"/>
</dbReference>
<dbReference type="InterPro" id="IPR017441">
    <property type="entry name" value="Protein_kinase_ATP_BS"/>
</dbReference>
<dbReference type="InterPro" id="IPR008271">
    <property type="entry name" value="Ser/Thr_kinase_AS"/>
</dbReference>
<dbReference type="PANTHER" id="PTHR47985">
    <property type="entry name" value="OS07G0668900 PROTEIN"/>
    <property type="match status" value="1"/>
</dbReference>
<dbReference type="PANTHER" id="PTHR47985:SF4">
    <property type="entry name" value="SERINE_THREONINE-PROTEIN KINASE PBL27"/>
    <property type="match status" value="1"/>
</dbReference>
<dbReference type="Pfam" id="PF00069">
    <property type="entry name" value="Pkinase"/>
    <property type="match status" value="1"/>
</dbReference>
<dbReference type="SMART" id="SM00220">
    <property type="entry name" value="S_TKc"/>
    <property type="match status" value="1"/>
</dbReference>
<dbReference type="SUPFAM" id="SSF56112">
    <property type="entry name" value="Protein kinase-like (PK-like)"/>
    <property type="match status" value="1"/>
</dbReference>
<dbReference type="PROSITE" id="PS00107">
    <property type="entry name" value="PROTEIN_KINASE_ATP"/>
    <property type="match status" value="1"/>
</dbReference>
<dbReference type="PROSITE" id="PS50011">
    <property type="entry name" value="PROTEIN_KINASE_DOM"/>
    <property type="match status" value="1"/>
</dbReference>
<dbReference type="PROSITE" id="PS00108">
    <property type="entry name" value="PROTEIN_KINASE_ST"/>
    <property type="match status" value="1"/>
</dbReference>
<gene>
    <name evidence="6" type="primary">PBL27</name>
    <name evidence="10" type="ordered locus">At5g18610</name>
    <name evidence="11" type="ORF">T28N17.90</name>
</gene>